<reference key="1">
    <citation type="submission" date="2009-06" db="EMBL/GenBank/DDBJ databases">
        <title>Complete sequence of chromosome of Geopacillus sp. WCH70.</title>
        <authorList>
            <consortium name="US DOE Joint Genome Institute"/>
            <person name="Lucas S."/>
            <person name="Copeland A."/>
            <person name="Lapidus A."/>
            <person name="Glavina del Rio T."/>
            <person name="Dalin E."/>
            <person name="Tice H."/>
            <person name="Bruce D."/>
            <person name="Goodwin L."/>
            <person name="Pitluck S."/>
            <person name="Chertkov O."/>
            <person name="Brettin T."/>
            <person name="Detter J.C."/>
            <person name="Han C."/>
            <person name="Larimer F."/>
            <person name="Land M."/>
            <person name="Hauser L."/>
            <person name="Kyrpides N."/>
            <person name="Mikhailova N."/>
            <person name="Brumm P."/>
            <person name="Mead D.A."/>
            <person name="Richardson P."/>
        </authorList>
    </citation>
    <scope>NUCLEOTIDE SEQUENCE [LARGE SCALE GENOMIC DNA]</scope>
    <source>
        <strain>WCH70</strain>
    </source>
</reference>
<protein>
    <recommendedName>
        <fullName evidence="1">Lactate utilization protein B</fullName>
    </recommendedName>
</protein>
<accession>C5D586</accession>
<sequence length="475" mass="52835">MAMKIDGANFHERVETNLHNTFMRGAVAGAQERLHTRRLEAAEELGNWEEWRALGEEIRQHTLENLDYYLMQLSENVAKRGGHVFFAQTAEEANNYIRNVVIQKNAKKIVKSKSMVTEEINLNAVLEAAGCEVIETDLGEYILQVDDHDPPSHIVAPALHKNKEQIRDVFRQKLGYKQTEKPEELALHARKMLRHEYLTADIGITGCNFAIAESGSITLVTNEGNADLVTALPKTQITVMGMERIVPTFEEMEVLVSLLTRSAVGQKLTSYITVLTGPRDEGDVDGPEEFHLVIVDNGRSNILGTEFQPVLQCIRCAACVNVCPVYRHIGGHSYGSIYSGPIGAVLSPLLGGYDDYKELPYASSLCAACTEACPVKIPLHELLLKHRQVIVEREGKAPISEKLAMKAFGLGASSSFLYKLGSKVAPSALTPFTNDDRISKGPGPLKAWTEIREFPAPNKERFRDWFREHQKGGEK</sequence>
<comment type="function">
    <text evidence="1">Is involved in L-lactate degradation and allows cells to grow with lactate as the sole carbon source. Has probably a role as an electron transporter during oxidation of L-lactate.</text>
</comment>
<comment type="similarity">
    <text evidence="1">Belongs to the LutB/YkgF family.</text>
</comment>
<dbReference type="EMBL" id="CP001638">
    <property type="protein sequence ID" value="ACS23312.1"/>
    <property type="molecule type" value="Genomic_DNA"/>
</dbReference>
<dbReference type="STRING" id="471223.GWCH70_0391"/>
<dbReference type="KEGG" id="gwc:GWCH70_0391"/>
<dbReference type="eggNOG" id="COG1139">
    <property type="taxonomic scope" value="Bacteria"/>
</dbReference>
<dbReference type="HOGENOM" id="CLU_027059_2_0_9"/>
<dbReference type="OrthoDB" id="9782337at2"/>
<dbReference type="GO" id="GO:0051539">
    <property type="term" value="F:4 iron, 4 sulfur cluster binding"/>
    <property type="evidence" value="ECO:0007669"/>
    <property type="project" value="UniProtKB-KW"/>
</dbReference>
<dbReference type="GO" id="GO:0046872">
    <property type="term" value="F:metal ion binding"/>
    <property type="evidence" value="ECO:0007669"/>
    <property type="project" value="UniProtKB-KW"/>
</dbReference>
<dbReference type="GO" id="GO:0006089">
    <property type="term" value="P:lactate metabolic process"/>
    <property type="evidence" value="ECO:0007669"/>
    <property type="project" value="UniProtKB-UniRule"/>
</dbReference>
<dbReference type="Gene3D" id="1.10.1060.10">
    <property type="entry name" value="Alpha-helical ferredoxin"/>
    <property type="match status" value="1"/>
</dbReference>
<dbReference type="Gene3D" id="3.40.50.10420">
    <property type="entry name" value="NagB/RpiA/CoA transferase-like"/>
    <property type="match status" value="1"/>
</dbReference>
<dbReference type="HAMAP" id="MF_02103">
    <property type="entry name" value="LutB"/>
    <property type="match status" value="1"/>
</dbReference>
<dbReference type="InterPro" id="IPR017896">
    <property type="entry name" value="4Fe4S_Fe-S-bd"/>
</dbReference>
<dbReference type="InterPro" id="IPR017900">
    <property type="entry name" value="4Fe4S_Fe_S_CS"/>
</dbReference>
<dbReference type="InterPro" id="IPR024185">
    <property type="entry name" value="FTHF_cligase-like_sf"/>
</dbReference>
<dbReference type="InterPro" id="IPR009051">
    <property type="entry name" value="Helical_ferredxn"/>
</dbReference>
<dbReference type="InterPro" id="IPR003741">
    <property type="entry name" value="LUD_dom"/>
</dbReference>
<dbReference type="InterPro" id="IPR022825">
    <property type="entry name" value="LutB"/>
</dbReference>
<dbReference type="InterPro" id="IPR004452">
    <property type="entry name" value="LutB/LldF"/>
</dbReference>
<dbReference type="InterPro" id="IPR024569">
    <property type="entry name" value="LutB_C"/>
</dbReference>
<dbReference type="InterPro" id="IPR037171">
    <property type="entry name" value="NagB/RpiA_transferase-like"/>
</dbReference>
<dbReference type="NCBIfam" id="TIGR00273">
    <property type="entry name" value="LutB/LldF family L-lactate oxidation iron-sulfur protein"/>
    <property type="match status" value="1"/>
</dbReference>
<dbReference type="PANTHER" id="PTHR47153">
    <property type="entry name" value="LACTATE UTILIZATION PROTEIN B"/>
    <property type="match status" value="1"/>
</dbReference>
<dbReference type="PANTHER" id="PTHR47153:SF2">
    <property type="entry name" value="LACTATE UTILIZATION PROTEIN B"/>
    <property type="match status" value="1"/>
</dbReference>
<dbReference type="Pfam" id="PF13183">
    <property type="entry name" value="Fer4_8"/>
    <property type="match status" value="1"/>
</dbReference>
<dbReference type="Pfam" id="PF02589">
    <property type="entry name" value="LUD_dom"/>
    <property type="match status" value="1"/>
</dbReference>
<dbReference type="Pfam" id="PF11870">
    <property type="entry name" value="LutB_C"/>
    <property type="match status" value="1"/>
</dbReference>
<dbReference type="SUPFAM" id="SSF46548">
    <property type="entry name" value="alpha-helical ferredoxin"/>
    <property type="match status" value="1"/>
</dbReference>
<dbReference type="SUPFAM" id="SSF100950">
    <property type="entry name" value="NagB/RpiA/CoA transferase-like"/>
    <property type="match status" value="1"/>
</dbReference>
<dbReference type="PROSITE" id="PS00198">
    <property type="entry name" value="4FE4S_FER_1"/>
    <property type="match status" value="1"/>
</dbReference>
<dbReference type="PROSITE" id="PS51379">
    <property type="entry name" value="4FE4S_FER_2"/>
    <property type="match status" value="1"/>
</dbReference>
<proteinExistence type="inferred from homology"/>
<feature type="chain" id="PRO_0000383982" description="Lactate utilization protein B">
    <location>
        <begin position="1"/>
        <end position="475"/>
    </location>
</feature>
<feature type="domain" description="4Fe-4S ferredoxin-type 1" evidence="1">
    <location>
        <begin position="304"/>
        <end position="334"/>
    </location>
</feature>
<feature type="domain" description="4Fe-4S ferredoxin-type 2" evidence="1">
    <location>
        <begin position="353"/>
        <end position="382"/>
    </location>
</feature>
<feature type="binding site" evidence="1">
    <location>
        <position position="313"/>
    </location>
    <ligand>
        <name>[4Fe-4S] cluster</name>
        <dbReference type="ChEBI" id="CHEBI:49883"/>
        <label>1</label>
    </ligand>
</feature>
<feature type="binding site" evidence="1">
    <location>
        <position position="316"/>
    </location>
    <ligand>
        <name>[4Fe-4S] cluster</name>
        <dbReference type="ChEBI" id="CHEBI:49883"/>
        <label>1</label>
    </ligand>
</feature>
<feature type="binding site" evidence="1">
    <location>
        <position position="319"/>
    </location>
    <ligand>
        <name>[4Fe-4S] cluster</name>
        <dbReference type="ChEBI" id="CHEBI:49883"/>
        <label>1</label>
    </ligand>
</feature>
<feature type="binding site" evidence="1">
    <location>
        <position position="323"/>
    </location>
    <ligand>
        <name>[4Fe-4S] cluster</name>
        <dbReference type="ChEBI" id="CHEBI:49883"/>
        <label>2</label>
    </ligand>
</feature>
<feature type="binding site" evidence="1">
    <location>
        <position position="366"/>
    </location>
    <ligand>
        <name>[4Fe-4S] cluster</name>
        <dbReference type="ChEBI" id="CHEBI:49883"/>
        <label>2</label>
    </ligand>
</feature>
<feature type="binding site" evidence="1">
    <location>
        <position position="369"/>
    </location>
    <ligand>
        <name>[4Fe-4S] cluster</name>
        <dbReference type="ChEBI" id="CHEBI:49883"/>
        <label>2</label>
    </ligand>
</feature>
<feature type="binding site" evidence="1">
    <location>
        <position position="373"/>
    </location>
    <ligand>
        <name>[4Fe-4S] cluster</name>
        <dbReference type="ChEBI" id="CHEBI:49883"/>
        <label>1</label>
    </ligand>
</feature>
<organism>
    <name type="scientific">Geobacillus sp. (strain WCH70)</name>
    <dbReference type="NCBI Taxonomy" id="471223"/>
    <lineage>
        <taxon>Bacteria</taxon>
        <taxon>Bacillati</taxon>
        <taxon>Bacillota</taxon>
        <taxon>Bacilli</taxon>
        <taxon>Bacillales</taxon>
        <taxon>Anoxybacillaceae</taxon>
        <taxon>Geobacillus</taxon>
    </lineage>
</organism>
<evidence type="ECO:0000255" key="1">
    <source>
        <dbReference type="HAMAP-Rule" id="MF_02103"/>
    </source>
</evidence>
<gene>
    <name evidence="1" type="primary">lutB</name>
    <name type="ordered locus">GWCH70_0391</name>
</gene>
<name>LUTB_GEOSW</name>
<keyword id="KW-0004">4Fe-4S</keyword>
<keyword id="KW-0249">Electron transport</keyword>
<keyword id="KW-0408">Iron</keyword>
<keyword id="KW-0411">Iron-sulfur</keyword>
<keyword id="KW-0479">Metal-binding</keyword>
<keyword id="KW-0677">Repeat</keyword>
<keyword id="KW-0813">Transport</keyword>